<dbReference type="EC" id="2.1.1.233"/>
<dbReference type="EMBL" id="CM002239">
    <property type="protein sequence ID" value="EAA33427.2"/>
    <property type="molecule type" value="Genomic_DNA"/>
</dbReference>
<dbReference type="RefSeq" id="XP_962663.2">
    <property type="nucleotide sequence ID" value="XM_957570.3"/>
</dbReference>
<dbReference type="SMR" id="Q7SAP7"/>
<dbReference type="FunCoup" id="Q7SAP7">
    <property type="interactions" value="541"/>
</dbReference>
<dbReference type="STRING" id="367110.Q7SAP7"/>
<dbReference type="PaxDb" id="5141-EFNCRP00000008272"/>
<dbReference type="EnsemblFungi" id="EAA33427">
    <property type="protein sequence ID" value="EAA33427"/>
    <property type="gene ID" value="NCU07993"/>
</dbReference>
<dbReference type="GeneID" id="3878802"/>
<dbReference type="KEGG" id="ncr:NCU07993"/>
<dbReference type="VEuPathDB" id="FungiDB:NCU07993"/>
<dbReference type="HOGENOM" id="CLU_031312_1_1_1"/>
<dbReference type="InParanoid" id="Q7SAP7"/>
<dbReference type="OMA" id="IIYEPIR"/>
<dbReference type="OrthoDB" id="203237at2759"/>
<dbReference type="Proteomes" id="UP000001805">
    <property type="component" value="Chromosome 4, Linkage Group IV"/>
</dbReference>
<dbReference type="GO" id="GO:0018423">
    <property type="term" value="F:protein C-terminal leucine carboxyl O-methyltransferase activity"/>
    <property type="evidence" value="ECO:0000318"/>
    <property type="project" value="GO_Central"/>
</dbReference>
<dbReference type="GO" id="GO:0032259">
    <property type="term" value="P:methylation"/>
    <property type="evidence" value="ECO:0007669"/>
    <property type="project" value="UniProtKB-KW"/>
</dbReference>
<dbReference type="Gene3D" id="3.40.50.150">
    <property type="entry name" value="Vaccinia Virus protein VP39"/>
    <property type="match status" value="1"/>
</dbReference>
<dbReference type="InterPro" id="IPR016651">
    <property type="entry name" value="LCMT1"/>
</dbReference>
<dbReference type="InterPro" id="IPR007213">
    <property type="entry name" value="Ppm1/Ppm2/Tcmp"/>
</dbReference>
<dbReference type="InterPro" id="IPR029063">
    <property type="entry name" value="SAM-dependent_MTases_sf"/>
</dbReference>
<dbReference type="PANTHER" id="PTHR13600">
    <property type="entry name" value="LEUCINE CARBOXYL METHYLTRANSFERASE"/>
    <property type="match status" value="1"/>
</dbReference>
<dbReference type="PANTHER" id="PTHR13600:SF21">
    <property type="entry name" value="LEUCINE CARBOXYL METHYLTRANSFERASE 1"/>
    <property type="match status" value="1"/>
</dbReference>
<dbReference type="Pfam" id="PF04072">
    <property type="entry name" value="LCM"/>
    <property type="match status" value="1"/>
</dbReference>
<dbReference type="PIRSF" id="PIRSF016305">
    <property type="entry name" value="LCM_mtfrase"/>
    <property type="match status" value="1"/>
</dbReference>
<dbReference type="SUPFAM" id="SSF53335">
    <property type="entry name" value="S-adenosyl-L-methionine-dependent methyltransferases"/>
    <property type="match status" value="1"/>
</dbReference>
<reference key="1">
    <citation type="journal article" date="2003" name="Nature">
        <title>The genome sequence of the filamentous fungus Neurospora crassa.</title>
        <authorList>
            <person name="Galagan J.E."/>
            <person name="Calvo S.E."/>
            <person name="Borkovich K.A."/>
            <person name="Selker E.U."/>
            <person name="Read N.D."/>
            <person name="Jaffe D.B."/>
            <person name="FitzHugh W."/>
            <person name="Ma L.-J."/>
            <person name="Smirnov S."/>
            <person name="Purcell S."/>
            <person name="Rehman B."/>
            <person name="Elkins T."/>
            <person name="Engels R."/>
            <person name="Wang S."/>
            <person name="Nielsen C.B."/>
            <person name="Butler J."/>
            <person name="Endrizzi M."/>
            <person name="Qui D."/>
            <person name="Ianakiev P."/>
            <person name="Bell-Pedersen D."/>
            <person name="Nelson M.A."/>
            <person name="Werner-Washburne M."/>
            <person name="Selitrennikoff C.P."/>
            <person name="Kinsey J.A."/>
            <person name="Braun E.L."/>
            <person name="Zelter A."/>
            <person name="Schulte U."/>
            <person name="Kothe G.O."/>
            <person name="Jedd G."/>
            <person name="Mewes H.-W."/>
            <person name="Staben C."/>
            <person name="Marcotte E."/>
            <person name="Greenberg D."/>
            <person name="Roy A."/>
            <person name="Foley K."/>
            <person name="Naylor J."/>
            <person name="Stange-Thomann N."/>
            <person name="Barrett R."/>
            <person name="Gnerre S."/>
            <person name="Kamal M."/>
            <person name="Kamvysselis M."/>
            <person name="Mauceli E.W."/>
            <person name="Bielke C."/>
            <person name="Rudd S."/>
            <person name="Frishman D."/>
            <person name="Krystofova S."/>
            <person name="Rasmussen C."/>
            <person name="Metzenberg R.L."/>
            <person name="Perkins D.D."/>
            <person name="Kroken S."/>
            <person name="Cogoni C."/>
            <person name="Macino G."/>
            <person name="Catcheside D.E.A."/>
            <person name="Li W."/>
            <person name="Pratt R.J."/>
            <person name="Osmani S.A."/>
            <person name="DeSouza C.P.C."/>
            <person name="Glass N.L."/>
            <person name="Orbach M.J."/>
            <person name="Berglund J.A."/>
            <person name="Voelker R."/>
            <person name="Yarden O."/>
            <person name="Plamann M."/>
            <person name="Seiler S."/>
            <person name="Dunlap J.C."/>
            <person name="Radford A."/>
            <person name="Aramayo R."/>
            <person name="Natvig D.O."/>
            <person name="Alex L.A."/>
            <person name="Mannhaupt G."/>
            <person name="Ebbole D.J."/>
            <person name="Freitag M."/>
            <person name="Paulsen I."/>
            <person name="Sachs M.S."/>
            <person name="Lander E.S."/>
            <person name="Nusbaum C."/>
            <person name="Birren B.W."/>
        </authorList>
    </citation>
    <scope>NUCLEOTIDE SEQUENCE [LARGE SCALE GENOMIC DNA]</scope>
    <source>
        <strain>ATCC 24698 / 74-OR23-1A / CBS 708.71 / DSM 1257 / FGSC 987</strain>
    </source>
</reference>
<name>LCMT1_NEUCR</name>
<feature type="chain" id="PRO_0000226131" description="Leucine carboxyl methyltransferase 1">
    <location>
        <begin position="1"/>
        <end position="431"/>
    </location>
</feature>
<feature type="region of interest" description="Disordered" evidence="2">
    <location>
        <begin position="228"/>
        <end position="268"/>
    </location>
</feature>
<feature type="binding site" evidence="1">
    <location>
        <position position="103"/>
    </location>
    <ligand>
        <name>S-adenosyl-L-methionine</name>
        <dbReference type="ChEBI" id="CHEBI:59789"/>
    </ligand>
</feature>
<feature type="binding site" evidence="1">
    <location>
        <position position="131"/>
    </location>
    <ligand>
        <name>S-adenosyl-L-methionine</name>
        <dbReference type="ChEBI" id="CHEBI:59789"/>
    </ligand>
</feature>
<feature type="binding site" evidence="1">
    <location>
        <position position="159"/>
    </location>
    <ligand>
        <name>S-adenosyl-L-methionine</name>
        <dbReference type="ChEBI" id="CHEBI:59789"/>
    </ligand>
</feature>
<feature type="binding site" evidence="1">
    <location>
        <begin position="219"/>
        <end position="220"/>
    </location>
    <ligand>
        <name>S-adenosyl-L-methionine</name>
        <dbReference type="ChEBI" id="CHEBI:59789"/>
    </ligand>
</feature>
<feature type="binding site" evidence="1">
    <location>
        <position position="289"/>
    </location>
    <ligand>
        <name>S-adenosyl-L-methionine</name>
        <dbReference type="ChEBI" id="CHEBI:59789"/>
    </ligand>
</feature>
<protein>
    <recommendedName>
        <fullName>Leucine carboxyl methyltransferase 1</fullName>
        <ecNumber>2.1.1.233</ecNumber>
    </recommendedName>
    <alternativeName>
        <fullName>Protein phosphatase methyltransferase 1</fullName>
    </alternativeName>
    <alternativeName>
        <fullName>[Phosphatase 2A protein]-leucine-carboxy methyltransferase 1</fullName>
    </alternativeName>
</protein>
<keyword id="KW-0489">Methyltransferase</keyword>
<keyword id="KW-1185">Reference proteome</keyword>
<keyword id="KW-0949">S-adenosyl-L-methionine</keyword>
<keyword id="KW-0808">Transferase</keyword>
<accession>Q7SAP7</accession>
<sequence>MSGSAPSIPNLLTLRGRIGGGGVTRGRYRGVIHRGGRGHGPGAPSASAAHDATIQGTDTDAAVSRLSAVQIGYIDDPYAELFAQSGPGAARRLPIINRGTYARTTAIDKLVDKFLDDTESSPEGRQIVSLGAGTDTRSLRLFSPSAPTPRKRVIYHEIDFPAMCEKKQRIVCSAPQLRSILSDPDSVEELSQHGGGNSWHSKAVAEKHKGSELWVHGLDLRAIAASQQPQQPLPPGVPIGSRGLHASPFTPGSTTQHEEQTEETSLPQQREPLTLTSLNPNLPTLIISECCLCYLPPSTASSIVSFFTTTIQSSLSIVIYEPIKPDDAFGKMMVSNLAAREIRMPTLEVYKEAEDQERRLREAGFSGGEGKGIGGARSKTIEQIWEEWTSQEEKERVDALEGLDEVEEWKLLAGHYIVVWGWRGVGVDLEI</sequence>
<comment type="function">
    <text evidence="1">Methylates the carboxyl group of the C-terminal leucine residue of protein phosphatase 2A catalytic subunits to form alpha-leucine ester residues.</text>
</comment>
<comment type="catalytic activity">
    <reaction>
        <text>[phosphatase 2A protein]-C-terminal L-leucine + S-adenosyl-L-methionine = [phosphatase 2A protein]-C-terminal L-leucine methyl ester + S-adenosyl-L-homocysteine</text>
        <dbReference type="Rhea" id="RHEA:48544"/>
        <dbReference type="Rhea" id="RHEA-COMP:12134"/>
        <dbReference type="Rhea" id="RHEA-COMP:12135"/>
        <dbReference type="ChEBI" id="CHEBI:57856"/>
        <dbReference type="ChEBI" id="CHEBI:59789"/>
        <dbReference type="ChEBI" id="CHEBI:90516"/>
        <dbReference type="ChEBI" id="CHEBI:90517"/>
        <dbReference type="EC" id="2.1.1.233"/>
    </reaction>
</comment>
<comment type="similarity">
    <text evidence="3">Belongs to the methyltransferase superfamily. LCMT family.</text>
</comment>
<evidence type="ECO:0000250" key="1"/>
<evidence type="ECO:0000256" key="2">
    <source>
        <dbReference type="SAM" id="MobiDB-lite"/>
    </source>
</evidence>
<evidence type="ECO:0000305" key="3"/>
<organism>
    <name type="scientific">Neurospora crassa (strain ATCC 24698 / 74-OR23-1A / CBS 708.71 / DSM 1257 / FGSC 987)</name>
    <dbReference type="NCBI Taxonomy" id="367110"/>
    <lineage>
        <taxon>Eukaryota</taxon>
        <taxon>Fungi</taxon>
        <taxon>Dikarya</taxon>
        <taxon>Ascomycota</taxon>
        <taxon>Pezizomycotina</taxon>
        <taxon>Sordariomycetes</taxon>
        <taxon>Sordariomycetidae</taxon>
        <taxon>Sordariales</taxon>
        <taxon>Sordariaceae</taxon>
        <taxon>Neurospora</taxon>
    </lineage>
</organism>
<proteinExistence type="inferred from homology"/>
<gene>
    <name type="primary">ppm-1</name>
    <name type="ORF">NCU07993</name>
</gene>